<accession>Q9LJF3</accession>
<accession>B9DHZ3</accession>
<accession>C0LGN0</accession>
<keyword id="KW-0067">ATP-binding</keyword>
<keyword id="KW-1003">Cell membrane</keyword>
<keyword id="KW-0325">Glycoprotein</keyword>
<keyword id="KW-0418">Kinase</keyword>
<keyword id="KW-0433">Leucine-rich repeat</keyword>
<keyword id="KW-0446">Lipid-binding</keyword>
<keyword id="KW-0472">Membrane</keyword>
<keyword id="KW-0547">Nucleotide-binding</keyword>
<keyword id="KW-0597">Phosphoprotein</keyword>
<keyword id="KW-0675">Receptor</keyword>
<keyword id="KW-1185">Reference proteome</keyword>
<keyword id="KW-0677">Repeat</keyword>
<keyword id="KW-0723">Serine/threonine-protein kinase</keyword>
<keyword id="KW-0732">Signal</keyword>
<keyword id="KW-0754">Steroid-binding</keyword>
<keyword id="KW-0808">Transferase</keyword>
<keyword id="KW-0812">Transmembrane</keyword>
<keyword id="KW-1133">Transmembrane helix</keyword>
<keyword id="KW-0829">Tyrosine-protein kinase</keyword>
<comment type="function">
    <text evidence="8">Receptor with a dual specificity kinase activity acting on both serine/threonine- and tyrosine-containing substrates. Binds brassinolide. Regulates, in response to brassinosteroid binding, a signaling cascade involved in plant development. May be involved in cell growth and vascular differentiation.</text>
</comment>
<comment type="catalytic activity">
    <reaction>
        <text>L-seryl-[protein] + ATP = O-phospho-L-seryl-[protein] + ADP + H(+)</text>
        <dbReference type="Rhea" id="RHEA:17989"/>
        <dbReference type="Rhea" id="RHEA-COMP:9863"/>
        <dbReference type="Rhea" id="RHEA-COMP:11604"/>
        <dbReference type="ChEBI" id="CHEBI:15378"/>
        <dbReference type="ChEBI" id="CHEBI:29999"/>
        <dbReference type="ChEBI" id="CHEBI:30616"/>
        <dbReference type="ChEBI" id="CHEBI:83421"/>
        <dbReference type="ChEBI" id="CHEBI:456216"/>
        <dbReference type="EC" id="2.7.11.1"/>
    </reaction>
</comment>
<comment type="catalytic activity">
    <reaction>
        <text>L-threonyl-[protein] + ATP = O-phospho-L-threonyl-[protein] + ADP + H(+)</text>
        <dbReference type="Rhea" id="RHEA:46608"/>
        <dbReference type="Rhea" id="RHEA-COMP:11060"/>
        <dbReference type="Rhea" id="RHEA-COMP:11605"/>
        <dbReference type="ChEBI" id="CHEBI:15378"/>
        <dbReference type="ChEBI" id="CHEBI:30013"/>
        <dbReference type="ChEBI" id="CHEBI:30616"/>
        <dbReference type="ChEBI" id="CHEBI:61977"/>
        <dbReference type="ChEBI" id="CHEBI:456216"/>
        <dbReference type="EC" id="2.7.11.1"/>
    </reaction>
</comment>
<comment type="catalytic activity">
    <reaction evidence="7">
        <text>L-tyrosyl-[protein] + ATP = O-phospho-L-tyrosyl-[protein] + ADP + H(+)</text>
        <dbReference type="Rhea" id="RHEA:10596"/>
        <dbReference type="Rhea" id="RHEA-COMP:10136"/>
        <dbReference type="Rhea" id="RHEA-COMP:20101"/>
        <dbReference type="ChEBI" id="CHEBI:15378"/>
        <dbReference type="ChEBI" id="CHEBI:30616"/>
        <dbReference type="ChEBI" id="CHEBI:46858"/>
        <dbReference type="ChEBI" id="CHEBI:61978"/>
        <dbReference type="ChEBI" id="CHEBI:456216"/>
        <dbReference type="EC" id="2.7.10.1"/>
    </reaction>
</comment>
<comment type="interaction">
    <interactant intactId="EBI-20651413">
        <id>Q9LJF3</id>
    </interactant>
    <interactant intactId="EBI-16902452">
        <id>Q8VYT3</id>
        <label>At4g30520</label>
    </interactant>
    <organismsDiffer>false</organismsDiffer>
    <experiments>2</experiments>
</comment>
<comment type="interaction">
    <interactant intactId="EBI-20651413">
        <id>Q9LJF3</id>
    </interactant>
    <interactant intactId="EBI-617138">
        <id>Q94F62</id>
        <label>BAK1</label>
    </interactant>
    <organismsDiffer>false</organismsDiffer>
    <experiments>2</experiments>
</comment>
<comment type="interaction">
    <interactant intactId="EBI-20651413">
        <id>Q9LJF3</id>
    </interactant>
    <interactant intactId="EBI-17069471">
        <id>O49545</id>
        <label>BAM1</label>
    </interactant>
    <organismsDiffer>false</organismsDiffer>
    <experiments>2</experiments>
</comment>
<comment type="interaction">
    <interactant intactId="EBI-20651413">
        <id>Q9LJF3</id>
    </interactant>
    <interactant intactId="EBI-16933791">
        <id>Q9M2Z1</id>
        <label>BAM2</label>
    </interactant>
    <organismsDiffer>false</organismsDiffer>
    <experiments>2</experiments>
</comment>
<comment type="interaction">
    <interactant intactId="EBI-20651413">
        <id>Q9LJF3</id>
    </interactant>
    <interactant intactId="EBI-16895926">
        <id>Q6XAT2</id>
        <label>ERL2</label>
    </interactant>
    <organismsDiffer>false</organismsDiffer>
    <experiments>2</experiments>
</comment>
<comment type="interaction">
    <interactant intactId="EBI-20651413">
        <id>Q9LJF3</id>
    </interactant>
    <interactant intactId="EBI-16904927">
        <id>C0LGX3</id>
        <label>HSL2</label>
    </interactant>
    <organismsDiffer>false</organismsDiffer>
    <experiments>2</experiments>
</comment>
<comment type="interaction">
    <interactant intactId="EBI-20651413">
        <id>Q9LJF3</id>
    </interactant>
    <interactant intactId="EBI-16924837">
        <id>Q9C8I6</id>
        <label>IOS1</label>
    </interactant>
    <organismsDiffer>false</organismsDiffer>
    <experiments>2</experiments>
</comment>
<comment type="interaction">
    <interactant intactId="EBI-20651413">
        <id>Q9LJF3</id>
    </interactant>
    <interactant intactId="EBI-20651739">
        <id>Q9ZVD4</id>
        <label>LRR-RLK</label>
    </interactant>
    <organismsDiffer>false</organismsDiffer>
    <experiments>2</experiments>
</comment>
<comment type="interaction">
    <interactant intactId="EBI-20651413">
        <id>Q9LJF3</id>
    </interactant>
    <interactant intactId="EBI-16955556">
        <id>Q8GX94</id>
        <label>MQB2.1</label>
    </interactant>
    <organismsDiffer>false</organismsDiffer>
    <experiments>2</experiments>
</comment>
<comment type="interaction">
    <interactant intactId="EBI-20651413">
        <id>Q9LJF3</id>
    </interactant>
    <interactant intactId="EBI-16146189">
        <id>Q9LFS4</id>
        <label>NIK1</label>
    </interactant>
    <organismsDiffer>false</organismsDiffer>
    <experiments>2</experiments>
</comment>
<comment type="interaction">
    <interactant intactId="EBI-20651413">
        <id>Q9LJF3</id>
    </interactant>
    <interactant intactId="EBI-16946268">
        <id>Q9FRS6</id>
        <label>PXL1</label>
    </interactant>
    <organismsDiffer>false</organismsDiffer>
    <experiments>3</experiments>
</comment>
<comment type="interaction">
    <interactant intactId="EBI-20651413">
        <id>Q9LJF3</id>
    </interactant>
    <interactant intactId="EBI-1238953">
        <id>Q9ZRF9</id>
        <label>RPK1</label>
    </interactant>
    <organismsDiffer>false</organismsDiffer>
    <experiments>2</experiments>
</comment>
<comment type="interaction">
    <interactant intactId="EBI-20651413">
        <id>Q9LJF3</id>
    </interactant>
    <interactant intactId="EBI-16887868">
        <id>Q8LPS5</id>
        <label>SERK5</label>
    </interactant>
    <organismsDiffer>false</organismsDiffer>
    <experiments>2</experiments>
</comment>
<comment type="subcellular location">
    <subcellularLocation>
        <location evidence="8">Cell membrane</location>
        <topology evidence="8">Single-pass type I membrane protein</topology>
    </subcellularLocation>
</comment>
<comment type="tissue specificity">
    <text evidence="8">Predominantly expressed in vascular tissues. Expressed only during postembryonic development with a very discrete pattern of expression, preferentially in the two protophloem cell files at the elongation zone of the root. The expression in these two cell files attenuates as the phloem cells differentiate in the upper root. In cotyledons and leaves, it is expressed in phloem cells, starting at the cotyledons and shoot apex, moving toward the basal part of the leaves, where the expression is weak. Expressed in the secondary and tertiary veins and in the upper part of the cotyledons and leaves. Weakly or not expressed in the inflorescence stems. Has some complementary expression with BRL1.</text>
</comment>
<comment type="domain">
    <text evidence="1">Contains two pairs of conservatively spaced Cys (Cys pair 1 and 2) possibly involved in forming some heterodimers.</text>
</comment>
<comment type="domain">
    <text evidence="1">A 70 amino acid island between the 18th and the 19th LRR is essential for the binding of brassinosteroids.</text>
</comment>
<comment type="PTM">
    <text>Autophosphorylated on Tyr and Thr residues.</text>
</comment>
<comment type="similarity">
    <text evidence="6">Belongs to the protein kinase superfamily. Ser/Thr protein kinase family.</text>
</comment>
<protein>
    <recommendedName>
        <fullName>Receptor-like protein kinase BRI1-like 3</fullName>
        <ecNumber>2.7.10.1</ecNumber>
        <ecNumber>2.7.11.1</ecNumber>
    </recommendedName>
    <alternativeName>
        <fullName>BRASSINOSTEROID INSENSITIVE 1-like protein 3</fullName>
    </alternativeName>
</protein>
<organism>
    <name type="scientific">Arabidopsis thaliana</name>
    <name type="common">Mouse-ear cress</name>
    <dbReference type="NCBI Taxonomy" id="3702"/>
    <lineage>
        <taxon>Eukaryota</taxon>
        <taxon>Viridiplantae</taxon>
        <taxon>Streptophyta</taxon>
        <taxon>Embryophyta</taxon>
        <taxon>Tracheophyta</taxon>
        <taxon>Spermatophyta</taxon>
        <taxon>Magnoliopsida</taxon>
        <taxon>eudicotyledons</taxon>
        <taxon>Gunneridae</taxon>
        <taxon>Pentapetalae</taxon>
        <taxon>rosids</taxon>
        <taxon>malvids</taxon>
        <taxon>Brassicales</taxon>
        <taxon>Brassicaceae</taxon>
        <taxon>Camelineae</taxon>
        <taxon>Arabidopsis</taxon>
    </lineage>
</organism>
<reference key="1">
    <citation type="journal article" date="2010" name="BMC Genomics">
        <title>Genome-wide cloning and sequence analysis of leucine-rich repeat receptor-like protein kinase genes in Arabidopsis thaliana.</title>
        <authorList>
            <person name="Gou X."/>
            <person name="He K."/>
            <person name="Yang H."/>
            <person name="Yuan T."/>
            <person name="Lin H."/>
            <person name="Clouse S.D."/>
            <person name="Li J."/>
        </authorList>
    </citation>
    <scope>NUCLEOTIDE SEQUENCE [MRNA]</scope>
    <source>
        <strain>cv. Columbia</strain>
    </source>
</reference>
<reference key="2">
    <citation type="journal article" date="2000" name="DNA Res.">
        <title>Structural analysis of Arabidopsis thaliana chromosome 3. II. Sequence features of the 4,251,695 bp regions covered by 90 P1, TAC and BAC clones.</title>
        <authorList>
            <person name="Kaneko T."/>
            <person name="Katoh T."/>
            <person name="Sato S."/>
            <person name="Nakamura Y."/>
            <person name="Asamizu E."/>
            <person name="Tabata S."/>
        </authorList>
    </citation>
    <scope>NUCLEOTIDE SEQUENCE [LARGE SCALE GENOMIC DNA]</scope>
    <source>
        <strain>cv. Columbia</strain>
    </source>
</reference>
<reference key="3">
    <citation type="journal article" date="2017" name="Plant J.">
        <title>Araport11: a complete reannotation of the Arabidopsis thaliana reference genome.</title>
        <authorList>
            <person name="Cheng C.Y."/>
            <person name="Krishnakumar V."/>
            <person name="Chan A.P."/>
            <person name="Thibaud-Nissen F."/>
            <person name="Schobel S."/>
            <person name="Town C.D."/>
        </authorList>
    </citation>
    <scope>GENOME REANNOTATION</scope>
    <source>
        <strain>cv. Columbia</strain>
    </source>
</reference>
<reference key="4">
    <citation type="journal article" date="2003" name="Science">
        <title>Empirical analysis of transcriptional activity in the Arabidopsis genome.</title>
        <authorList>
            <person name="Yamada K."/>
            <person name="Lim J."/>
            <person name="Dale J.M."/>
            <person name="Chen H."/>
            <person name="Shinn P."/>
            <person name="Palm C.J."/>
            <person name="Southwick A.M."/>
            <person name="Wu H.C."/>
            <person name="Kim C.J."/>
            <person name="Nguyen M."/>
            <person name="Pham P.K."/>
            <person name="Cheuk R.F."/>
            <person name="Karlin-Newmann G."/>
            <person name="Liu S.X."/>
            <person name="Lam B."/>
            <person name="Sakano H."/>
            <person name="Wu T."/>
            <person name="Yu G."/>
            <person name="Miranda M."/>
            <person name="Quach H.L."/>
            <person name="Tripp M."/>
            <person name="Chang C.H."/>
            <person name="Lee J.M."/>
            <person name="Toriumi M.J."/>
            <person name="Chan M.M."/>
            <person name="Tang C.C."/>
            <person name="Onodera C.S."/>
            <person name="Deng J.M."/>
            <person name="Akiyama K."/>
            <person name="Ansari Y."/>
            <person name="Arakawa T."/>
            <person name="Banh J."/>
            <person name="Banno F."/>
            <person name="Bowser L."/>
            <person name="Brooks S.Y."/>
            <person name="Carninci P."/>
            <person name="Chao Q."/>
            <person name="Choy N."/>
            <person name="Enju A."/>
            <person name="Goldsmith A.D."/>
            <person name="Gurjal M."/>
            <person name="Hansen N.F."/>
            <person name="Hayashizaki Y."/>
            <person name="Johnson-Hopson C."/>
            <person name="Hsuan V.W."/>
            <person name="Iida K."/>
            <person name="Karnes M."/>
            <person name="Khan S."/>
            <person name="Koesema E."/>
            <person name="Ishida J."/>
            <person name="Jiang P.X."/>
            <person name="Jones T."/>
            <person name="Kawai J."/>
            <person name="Kamiya A."/>
            <person name="Meyers C."/>
            <person name="Nakajima M."/>
            <person name="Narusaka M."/>
            <person name="Seki M."/>
            <person name="Sakurai T."/>
            <person name="Satou M."/>
            <person name="Tamse R."/>
            <person name="Vaysberg M."/>
            <person name="Wallender E.K."/>
            <person name="Wong C."/>
            <person name="Yamamura Y."/>
            <person name="Yuan S."/>
            <person name="Shinozaki K."/>
            <person name="Davis R.W."/>
            <person name="Theologis A."/>
            <person name="Ecker J.R."/>
        </authorList>
    </citation>
    <scope>NUCLEOTIDE SEQUENCE [LARGE SCALE MRNA]</scope>
    <source>
        <strain>cv. Columbia</strain>
    </source>
</reference>
<reference key="5">
    <citation type="journal article" date="2009" name="DNA Res.">
        <title>Analysis of multiple occurrences of alternative splicing events in Arabidopsis thaliana using novel sequenced full-length cDNAs.</title>
        <authorList>
            <person name="Iida K."/>
            <person name="Fukami-Kobayashi K."/>
            <person name="Toyoda A."/>
            <person name="Sakaki Y."/>
            <person name="Kobayashi M."/>
            <person name="Seki M."/>
            <person name="Shinozaki K."/>
        </authorList>
    </citation>
    <scope>NUCLEOTIDE SEQUENCE [LARGE SCALE MRNA] OF 128-1164</scope>
    <source>
        <strain>cv. Columbia</strain>
    </source>
</reference>
<reference key="6">
    <citation type="journal article" date="2004" name="Development">
        <title>BRL1 and BRL3 are novel brassinosteroid receptors that function in vascular differentiation in Arabidopsis.</title>
        <authorList>
            <person name="Cano-Delgado A."/>
            <person name="Yin Y."/>
            <person name="Yu C."/>
            <person name="Vafeados D."/>
            <person name="Mora-Garcia S."/>
            <person name="Cheng J.-C."/>
            <person name="Nam K.H."/>
            <person name="Li J."/>
            <person name="Chory J."/>
        </authorList>
    </citation>
    <scope>FUNCTION</scope>
    <scope>SUBCELLULAR LOCATION</scope>
    <scope>STEROID-BINDING</scope>
    <scope>TISSUE SPECIFICITY</scope>
</reference>
<reference key="7">
    <citation type="journal article" date="2009" name="Proc. Natl. Acad. Sci. U.S.A.">
        <title>Tyrosine phosphorylation of the BRI1 receptor kinase emerges as a component of brassinosteroid signaling in Arabidopsis.</title>
        <authorList>
            <person name="Oh M.-H."/>
            <person name="Wang X."/>
            <person name="Kota U."/>
            <person name="Goshe M.B."/>
            <person name="Clouse S.D."/>
            <person name="Huber S.C."/>
        </authorList>
    </citation>
    <scope>AUTOPHOSPHORYLATION</scope>
</reference>
<feature type="signal peptide" evidence="5">
    <location>
        <begin position="1"/>
        <end position="23"/>
    </location>
</feature>
<feature type="chain" id="PRO_0000024310" description="Receptor-like protein kinase BRI1-like 3">
    <location>
        <begin position="24"/>
        <end position="1164"/>
    </location>
</feature>
<feature type="topological domain" description="Extracellular" evidence="5">
    <location>
        <begin position="24"/>
        <end position="772"/>
    </location>
</feature>
<feature type="transmembrane region" description="Helical" evidence="5">
    <location>
        <begin position="773"/>
        <end position="793"/>
    </location>
</feature>
<feature type="topological domain" description="Cytoplasmic" evidence="5">
    <location>
        <begin position="794"/>
        <end position="1164"/>
    </location>
</feature>
<feature type="repeat" description="LRR 1">
    <location>
        <begin position="77"/>
        <end position="98"/>
    </location>
</feature>
<feature type="repeat" description="LRR 2">
    <location>
        <begin position="102"/>
        <end position="123"/>
    </location>
</feature>
<feature type="repeat" description="LRR 3">
    <location>
        <begin position="125"/>
        <end position="146"/>
    </location>
</feature>
<feature type="repeat" description="LRR 4">
    <location>
        <begin position="151"/>
        <end position="173"/>
    </location>
</feature>
<feature type="repeat" description="LRR 5">
    <location>
        <begin position="176"/>
        <end position="197"/>
    </location>
</feature>
<feature type="repeat" description="LRR 6">
    <location>
        <begin position="202"/>
        <end position="224"/>
    </location>
</feature>
<feature type="repeat" description="LRR 7">
    <location>
        <begin position="227"/>
        <end position="248"/>
    </location>
</feature>
<feature type="repeat" description="LRR 8">
    <location>
        <begin position="252"/>
        <end position="274"/>
    </location>
</feature>
<feature type="repeat" description="LRR 9">
    <location>
        <begin position="278"/>
        <end position="300"/>
    </location>
</feature>
<feature type="repeat" description="LRR 10">
    <location>
        <begin position="303"/>
        <end position="325"/>
    </location>
</feature>
<feature type="repeat" description="LRR 11">
    <location>
        <begin position="327"/>
        <end position="347"/>
    </location>
</feature>
<feature type="repeat" description="LRR 12">
    <location>
        <begin position="352"/>
        <end position="375"/>
    </location>
</feature>
<feature type="repeat" description="LRR 13">
    <location>
        <begin position="376"/>
        <end position="397"/>
    </location>
</feature>
<feature type="repeat" description="LRR 14">
    <location>
        <begin position="403"/>
        <end position="424"/>
    </location>
</feature>
<feature type="repeat" description="LRR 15">
    <location>
        <begin position="427"/>
        <end position="448"/>
    </location>
</feature>
<feature type="repeat" description="LRR 16">
    <location>
        <begin position="451"/>
        <end position="473"/>
    </location>
</feature>
<feature type="repeat" description="LRR 17">
    <location>
        <begin position="476"/>
        <end position="498"/>
    </location>
</feature>
<feature type="repeat" description="LRR 18">
    <location>
        <begin position="500"/>
        <end position="523"/>
    </location>
</feature>
<feature type="repeat" description="LRR 19">
    <location>
        <begin position="524"/>
        <end position="546"/>
    </location>
</feature>
<feature type="repeat" description="LRR 20">
    <location>
        <begin position="548"/>
        <end position="570"/>
    </location>
</feature>
<feature type="repeat" description="LRR 21">
    <location>
        <begin position="640"/>
        <end position="662"/>
    </location>
</feature>
<feature type="repeat" description="LRR 22">
    <location>
        <begin position="664"/>
        <end position="686"/>
    </location>
</feature>
<feature type="repeat" description="LRR 23">
    <location>
        <begin position="688"/>
        <end position="711"/>
    </location>
</feature>
<feature type="repeat" description="LRR 24">
    <location>
        <begin position="712"/>
        <end position="734"/>
    </location>
</feature>
<feature type="domain" description="Protein kinase" evidence="6">
    <location>
        <begin position="858"/>
        <end position="1136"/>
    </location>
</feature>
<feature type="short sequence motif" description="Cys pair 1">
    <location>
        <begin position="65"/>
        <end position="72"/>
    </location>
</feature>
<feature type="short sequence motif" description="Cys pair 2">
    <location>
        <begin position="748"/>
        <end position="755"/>
    </location>
</feature>
<feature type="active site" description="Proton acceptor" evidence="6 7">
    <location>
        <position position="985"/>
    </location>
</feature>
<feature type="binding site" evidence="6">
    <location>
        <begin position="864"/>
        <end position="872"/>
    </location>
    <ligand>
        <name>ATP</name>
        <dbReference type="ChEBI" id="CHEBI:30616"/>
    </ligand>
</feature>
<feature type="binding site" evidence="6">
    <location>
        <position position="886"/>
    </location>
    <ligand>
        <name>ATP</name>
        <dbReference type="ChEBI" id="CHEBI:30616"/>
    </ligand>
</feature>
<feature type="modified residue" description="Phosphothreonine" evidence="3">
    <location>
        <position position="847"/>
    </location>
</feature>
<feature type="modified residue" description="Phosphothreonine" evidence="3">
    <location>
        <position position="855"/>
    </location>
</feature>
<feature type="modified residue" description="Phosphotyrosine" evidence="3">
    <location>
        <position position="931"/>
    </location>
</feature>
<feature type="modified residue" description="Phosphoserine" evidence="4">
    <location>
        <position position="1020"/>
    </location>
</feature>
<feature type="modified residue" description="Phosphotyrosine" evidence="2">
    <location>
        <position position="1028"/>
    </location>
</feature>
<feature type="glycosylation site" description="N-linked (GlcNAc...) asparagine" evidence="5">
    <location>
        <position position="32"/>
    </location>
</feature>
<feature type="glycosylation site" description="N-linked (GlcNAc...) asparagine" evidence="5">
    <location>
        <position position="96"/>
    </location>
</feature>
<feature type="glycosylation site" description="N-linked (GlcNAc...) asparagine" evidence="5">
    <location>
        <position position="112"/>
    </location>
</feature>
<feature type="glycosylation site" description="N-linked (GlcNAc...) asparagine" evidence="5">
    <location>
        <position position="156"/>
    </location>
</feature>
<feature type="glycosylation site" description="N-linked (GlcNAc...) asparagine" evidence="5">
    <location>
        <position position="212"/>
    </location>
</feature>
<feature type="glycosylation site" description="N-linked (GlcNAc...) asparagine" evidence="5">
    <location>
        <position position="227"/>
    </location>
</feature>
<feature type="glycosylation site" description="N-linked (GlcNAc...) asparagine" evidence="5">
    <location>
        <position position="257"/>
    </location>
</feature>
<feature type="glycosylation site" description="N-linked (GlcNAc...) asparagine" evidence="5">
    <location>
        <position position="362"/>
    </location>
</feature>
<feature type="glycosylation site" description="N-linked (GlcNAc...) asparagine" evidence="5">
    <location>
        <position position="373"/>
    </location>
</feature>
<feature type="glycosylation site" description="N-linked (GlcNAc...) asparagine" evidence="5">
    <location>
        <position position="461"/>
    </location>
</feature>
<feature type="glycosylation site" description="N-linked (GlcNAc...) asparagine" evidence="5">
    <location>
        <position position="532"/>
    </location>
</feature>
<feature type="glycosylation site" description="N-linked (GlcNAc...) asparagine" evidence="5">
    <location>
        <position position="558"/>
    </location>
</feature>
<feature type="glycosylation site" description="N-linked (GlcNAc...) asparagine" evidence="5">
    <location>
        <position position="638"/>
    </location>
</feature>
<feature type="glycosylation site" description="N-linked (GlcNAc...) asparagine" evidence="5">
    <location>
        <position position="722"/>
    </location>
</feature>
<feature type="glycosylation site" description="N-linked (GlcNAc...) asparagine" evidence="5">
    <location>
        <position position="743"/>
    </location>
</feature>
<feature type="sequence conflict" description="In Ref. 5; BAH20360." evidence="9" ref="5">
    <original>S</original>
    <variation>R</variation>
    <location>
        <position position="1011"/>
    </location>
</feature>
<name>BRL3_ARATH</name>
<evidence type="ECO:0000250" key="1"/>
<evidence type="ECO:0000250" key="2">
    <source>
        <dbReference type="UniProtKB" id="C0LGT6"/>
    </source>
</evidence>
<evidence type="ECO:0000250" key="3">
    <source>
        <dbReference type="UniProtKB" id="O22476"/>
    </source>
</evidence>
<evidence type="ECO:0000250" key="4">
    <source>
        <dbReference type="UniProtKB" id="Q9M0G7"/>
    </source>
</evidence>
<evidence type="ECO:0000255" key="5"/>
<evidence type="ECO:0000255" key="6">
    <source>
        <dbReference type="PROSITE-ProRule" id="PRU00159"/>
    </source>
</evidence>
<evidence type="ECO:0000255" key="7">
    <source>
        <dbReference type="PROSITE-ProRule" id="PRU10027"/>
    </source>
</evidence>
<evidence type="ECO:0000269" key="8">
    <source>
    </source>
</evidence>
<evidence type="ECO:0000305" key="9"/>
<dbReference type="EC" id="2.7.10.1"/>
<dbReference type="EC" id="2.7.11.1"/>
<dbReference type="EMBL" id="FJ708720">
    <property type="protein sequence ID" value="ACN59315.1"/>
    <property type="molecule type" value="mRNA"/>
</dbReference>
<dbReference type="EMBL" id="AP000603">
    <property type="protein sequence ID" value="BAB01743.1"/>
    <property type="molecule type" value="Genomic_DNA"/>
</dbReference>
<dbReference type="EMBL" id="CP002686">
    <property type="protein sequence ID" value="AEE75340.1"/>
    <property type="molecule type" value="Genomic_DNA"/>
</dbReference>
<dbReference type="EMBL" id="AY128280">
    <property type="protein sequence ID" value="AAM91089.1"/>
    <property type="molecule type" value="mRNA"/>
</dbReference>
<dbReference type="EMBL" id="AK317701">
    <property type="protein sequence ID" value="BAH20360.1"/>
    <property type="molecule type" value="mRNA"/>
</dbReference>
<dbReference type="RefSeq" id="NP_187946.1">
    <property type="nucleotide sequence ID" value="NM_112183.3"/>
</dbReference>
<dbReference type="SMR" id="Q9LJF3"/>
<dbReference type="BioGRID" id="5872">
    <property type="interactions" value="43"/>
</dbReference>
<dbReference type="FunCoup" id="Q9LJF3">
    <property type="interactions" value="184"/>
</dbReference>
<dbReference type="IntAct" id="Q9LJF3">
    <property type="interactions" value="42"/>
</dbReference>
<dbReference type="STRING" id="3702.Q9LJF3"/>
<dbReference type="GlyCosmos" id="Q9LJF3">
    <property type="glycosylation" value="15 sites, No reported glycans"/>
</dbReference>
<dbReference type="GlyGen" id="Q9LJF3">
    <property type="glycosylation" value="15 sites"/>
</dbReference>
<dbReference type="iPTMnet" id="Q9LJF3"/>
<dbReference type="PaxDb" id="3702-AT3G13380.1"/>
<dbReference type="ProteomicsDB" id="240632"/>
<dbReference type="EnsemblPlants" id="AT3G13380.1">
    <property type="protein sequence ID" value="AT3G13380.1"/>
    <property type="gene ID" value="AT3G13380"/>
</dbReference>
<dbReference type="GeneID" id="820538"/>
<dbReference type="Gramene" id="AT3G13380.1">
    <property type="protein sequence ID" value="AT3G13380.1"/>
    <property type="gene ID" value="AT3G13380"/>
</dbReference>
<dbReference type="KEGG" id="ath:AT3G13380"/>
<dbReference type="Araport" id="AT3G13380"/>
<dbReference type="TAIR" id="AT3G13380">
    <property type="gene designation" value="BRL3"/>
</dbReference>
<dbReference type="eggNOG" id="ENOG502QQ5H">
    <property type="taxonomic scope" value="Eukaryota"/>
</dbReference>
<dbReference type="HOGENOM" id="CLU_000288_22_4_1"/>
<dbReference type="InParanoid" id="Q9LJF3"/>
<dbReference type="OMA" id="SHAHPKK"/>
<dbReference type="PhylomeDB" id="Q9LJF3"/>
<dbReference type="PRO" id="PR:Q9LJF3"/>
<dbReference type="Proteomes" id="UP000006548">
    <property type="component" value="Chromosome 3"/>
</dbReference>
<dbReference type="ExpressionAtlas" id="Q9LJF3">
    <property type="expression patterns" value="baseline and differential"/>
</dbReference>
<dbReference type="GO" id="GO:0005886">
    <property type="term" value="C:plasma membrane"/>
    <property type="evidence" value="ECO:0007005"/>
    <property type="project" value="TAIR"/>
</dbReference>
<dbReference type="GO" id="GO:0005524">
    <property type="term" value="F:ATP binding"/>
    <property type="evidence" value="ECO:0007669"/>
    <property type="project" value="UniProtKB-KW"/>
</dbReference>
<dbReference type="GO" id="GO:0106310">
    <property type="term" value="F:protein serine kinase activity"/>
    <property type="evidence" value="ECO:0007669"/>
    <property type="project" value="RHEA"/>
</dbReference>
<dbReference type="GO" id="GO:0004674">
    <property type="term" value="F:protein serine/threonine kinase activity"/>
    <property type="evidence" value="ECO:0007669"/>
    <property type="project" value="UniProtKB-KW"/>
</dbReference>
<dbReference type="GO" id="GO:0005496">
    <property type="term" value="F:steroid binding"/>
    <property type="evidence" value="ECO:0007669"/>
    <property type="project" value="UniProtKB-KW"/>
</dbReference>
<dbReference type="GO" id="GO:0004714">
    <property type="term" value="F:transmembrane receptor protein tyrosine kinase activity"/>
    <property type="evidence" value="ECO:0007669"/>
    <property type="project" value="UniProtKB-EC"/>
</dbReference>
<dbReference type="FunFam" id="1.10.510.10:FF:000291">
    <property type="entry name" value="Brassinosteroid LRR receptor kinase"/>
    <property type="match status" value="1"/>
</dbReference>
<dbReference type="FunFam" id="3.80.10.10:FF:000125">
    <property type="entry name" value="Brassinosteroid LRR receptor kinase"/>
    <property type="match status" value="1"/>
</dbReference>
<dbReference type="FunFam" id="3.80.10.10:FF:000383">
    <property type="entry name" value="Leucine-rich repeat receptor protein kinase EMS1"/>
    <property type="match status" value="1"/>
</dbReference>
<dbReference type="FunFam" id="3.30.1490.310:FF:000001">
    <property type="entry name" value="Serine/threonine-protein kinase BRI1-like 1"/>
    <property type="match status" value="1"/>
</dbReference>
<dbReference type="FunFam" id="3.30.200.20:FF:000150">
    <property type="entry name" value="serine/threonine-protein kinase BRI1-like 2"/>
    <property type="match status" value="1"/>
</dbReference>
<dbReference type="Gene3D" id="3.30.1490.310">
    <property type="match status" value="1"/>
</dbReference>
<dbReference type="Gene3D" id="3.30.200.20">
    <property type="entry name" value="Phosphorylase Kinase, domain 1"/>
    <property type="match status" value="1"/>
</dbReference>
<dbReference type="Gene3D" id="3.80.10.10">
    <property type="entry name" value="Ribonuclease Inhibitor"/>
    <property type="match status" value="1"/>
</dbReference>
<dbReference type="Gene3D" id="1.10.510.10">
    <property type="entry name" value="Transferase(Phosphotransferase) domain 1"/>
    <property type="match status" value="1"/>
</dbReference>
<dbReference type="InterPro" id="IPR045381">
    <property type="entry name" value="BRI1_island_dom"/>
</dbReference>
<dbReference type="InterPro" id="IPR011009">
    <property type="entry name" value="Kinase-like_dom_sf"/>
</dbReference>
<dbReference type="InterPro" id="IPR001611">
    <property type="entry name" value="Leu-rich_rpt"/>
</dbReference>
<dbReference type="InterPro" id="IPR003591">
    <property type="entry name" value="Leu-rich_rpt_typical-subtyp"/>
</dbReference>
<dbReference type="InterPro" id="IPR032675">
    <property type="entry name" value="LRR_dom_sf"/>
</dbReference>
<dbReference type="InterPro" id="IPR013210">
    <property type="entry name" value="LRR_N_plant-typ"/>
</dbReference>
<dbReference type="InterPro" id="IPR051716">
    <property type="entry name" value="Plant_RL_S/T_kinase"/>
</dbReference>
<dbReference type="InterPro" id="IPR000719">
    <property type="entry name" value="Prot_kinase_dom"/>
</dbReference>
<dbReference type="InterPro" id="IPR017441">
    <property type="entry name" value="Protein_kinase_ATP_BS"/>
</dbReference>
<dbReference type="InterPro" id="IPR008271">
    <property type="entry name" value="Ser/Thr_kinase_AS"/>
</dbReference>
<dbReference type="PANTHER" id="PTHR48053">
    <property type="entry name" value="LEUCINE RICH REPEAT FAMILY PROTEIN, EXPRESSED"/>
    <property type="match status" value="1"/>
</dbReference>
<dbReference type="PANTHER" id="PTHR48053:SF48">
    <property type="entry name" value="RECEPTOR-LIKE PROTEIN KINASE BRI1-LIKE 3"/>
    <property type="match status" value="1"/>
</dbReference>
<dbReference type="Pfam" id="PF20141">
    <property type="entry name" value="Island"/>
    <property type="match status" value="1"/>
</dbReference>
<dbReference type="Pfam" id="PF00560">
    <property type="entry name" value="LRR_1"/>
    <property type="match status" value="5"/>
</dbReference>
<dbReference type="Pfam" id="PF13516">
    <property type="entry name" value="LRR_6"/>
    <property type="match status" value="2"/>
</dbReference>
<dbReference type="Pfam" id="PF13855">
    <property type="entry name" value="LRR_8"/>
    <property type="match status" value="3"/>
</dbReference>
<dbReference type="Pfam" id="PF08263">
    <property type="entry name" value="LRRNT_2"/>
    <property type="match status" value="1"/>
</dbReference>
<dbReference type="Pfam" id="PF00069">
    <property type="entry name" value="Pkinase"/>
    <property type="match status" value="1"/>
</dbReference>
<dbReference type="SMART" id="SM00369">
    <property type="entry name" value="LRR_TYP"/>
    <property type="match status" value="8"/>
</dbReference>
<dbReference type="SMART" id="SM00220">
    <property type="entry name" value="S_TKc"/>
    <property type="match status" value="1"/>
</dbReference>
<dbReference type="SUPFAM" id="SSF56112">
    <property type="entry name" value="Protein kinase-like (PK-like)"/>
    <property type="match status" value="1"/>
</dbReference>
<dbReference type="SUPFAM" id="SSF52047">
    <property type="entry name" value="RNI-like"/>
    <property type="match status" value="2"/>
</dbReference>
<dbReference type="PROSITE" id="PS00107">
    <property type="entry name" value="PROTEIN_KINASE_ATP"/>
    <property type="match status" value="1"/>
</dbReference>
<dbReference type="PROSITE" id="PS50011">
    <property type="entry name" value="PROTEIN_KINASE_DOM"/>
    <property type="match status" value="1"/>
</dbReference>
<dbReference type="PROSITE" id="PS00108">
    <property type="entry name" value="PROTEIN_KINASE_ST"/>
    <property type="match status" value="1"/>
</dbReference>
<proteinExistence type="evidence at protein level"/>
<gene>
    <name type="primary">BRL3</name>
    <name type="ordered locus">At3g13380</name>
    <name type="ORF">MRP15.1</name>
</gene>
<sequence>MKQQWQFLILCLLVLFLTVDSRGRRLLSDDVNDTALLTAFKQTSIKSDPTNFLGNWRYGSGRDPCTWRGVSCSSDGRVIGLDLRNGGLTGTLNLNNLTALSNLRSLYLQGNNFSSGDSSSSSGCSLEVLDLSSNSLTDSSIVDYVFSTCLNLVSVNFSHNKLAGKLKSSPSASNKRITTVDLSNNRFSDEIPETFIADFPNSLKHLDLSGNNVTGDFSRLSFGLCENLTVFSLSQNSISGDRFPVSLSNCKLLETLNLSRNSLIGKIPGDDYWGNFQNLRQLSLAHNLYSGEIPPELSLLCRTLEVLDLSGNSLTGQLPQSFTSCGSLQSLNLGNNKLSGDFLSTVVSKLSRITNLYLPFNNISGSVPISLTNCSNLRVLDLSSNEFTGEVPSGFCSLQSSSVLEKLLIANNYLSGTVPVELGKCKSLKTIDLSFNALTGLIPKEIWTLPKLSDLVMWANNLTGGIPESICVDGGNLETLILNNNLLTGSLPESISKCTNMLWISLSSNLLTGEIPVGIGKLEKLAILQLGNNSLTGNIPSELGNCKNLIWLDLNSNNLTGNLPGELASQAGLVMPGSVSGKQFAFVRNEGGTDCRGAGGLVEFEGIRAERLEHFPMVHSCPKTRIYSGMTMYMFSSNGSMIYLDLSYNAVSGSIPLGYGAMGYLQVLNLGHNLLTGTIPDSFGGLKAIGVLDLSHNDLQGFLPGSLGGLSFLSDLDVSNNNLTGPIPFGGQLTTFPLTRYANNSGLCGVPLPPCSSGSRPTRSHAHPKKQSIATGMSAGIVFSFMCIVMLIMALYRARKVQKKEKQREKYIESLPTSGSSSWKLSSVHEPLSINVATFEKPLRKLTFAHLLEATNGFSADSMIGSGGFGDVYKAKLADGSVVAIKKLIQVTGQGDREFMAEMETIGKIKHRNLVPLLGYCKIGEERLLVYEYMKYGSLETVLHEKTKKGGIFLDWSARKKIAIGAARGLAFLHHSCIPHIIHRDMKSSNVLLDQDFVARVSDFGMARLVSALDTHLSVSTLAGTPGYVPPEYYQSFRCTAKGDVYSYGVILLELLSGKKPIDPEEFGEDNNLVGWAKQLYREKRGAEILDPELVTDKSGDVELLHYLKIASQCLDDRPFKRPTMIQVMTMFKELVQVDTENDSLDEFLLKETPLVEESRDKEP</sequence>